<evidence type="ECO:0000255" key="1">
    <source>
        <dbReference type="HAMAP-Rule" id="MF_01808"/>
    </source>
</evidence>
<evidence type="ECO:0000255" key="2">
    <source>
        <dbReference type="PROSITE-ProRule" id="PRU01246"/>
    </source>
</evidence>
<evidence type="ECO:0000255" key="3">
    <source>
        <dbReference type="PROSITE-ProRule" id="PRU01248"/>
    </source>
</evidence>
<sequence>MLTALNRYWDYLRIERQMSPHTITNYQHQLDATIKILAQQDIHSWTQVTPSVVRFILAESKKQGLKEKSLALRLSALRRFLSFLVQQGELKVNPATGISAPKQGWHLPKNMDGEQIQQLLANDSKEPIDIRDRAILELMYSSGLRLSELQGLDLNSINTRVREVRVIGKGNKERVVPFGRYASHAIQEWLKVRALFNPKDEALFVSQLGNRISHRAIQKRLETWGIRQGLNSHLNPHKLRHSFATHMLEASSDLRAVQELLGHSNLSTTQIYTHLNFQHLAEVYDQAHPRAKRKK</sequence>
<feature type="chain" id="PRO_1000070005" description="Tyrosine recombinase XerC">
    <location>
        <begin position="1"/>
        <end position="295"/>
    </location>
</feature>
<feature type="domain" description="Core-binding (CB)" evidence="3">
    <location>
        <begin position="1"/>
        <end position="85"/>
    </location>
</feature>
<feature type="domain" description="Tyr recombinase" evidence="2">
    <location>
        <begin position="106"/>
        <end position="285"/>
    </location>
</feature>
<feature type="active site" evidence="1">
    <location>
        <position position="145"/>
    </location>
</feature>
<feature type="active site" evidence="1">
    <location>
        <position position="169"/>
    </location>
</feature>
<feature type="active site" evidence="1">
    <location>
        <position position="237"/>
    </location>
</feature>
<feature type="active site" evidence="1">
    <location>
        <position position="240"/>
    </location>
</feature>
<feature type="active site" evidence="1">
    <location>
        <position position="263"/>
    </location>
</feature>
<feature type="active site" description="O-(3'-phospho-DNA)-tyrosine intermediate" evidence="1">
    <location>
        <position position="272"/>
    </location>
</feature>
<comment type="function">
    <text evidence="1">Site-specific tyrosine recombinase, which acts by catalyzing the cutting and rejoining of the recombining DNA molecules. The XerC-XerD complex is essential to convert dimers of the bacterial chromosome into monomers to permit their segregation at cell division. It also contributes to the segregational stability of plasmids.</text>
</comment>
<comment type="subunit">
    <text evidence="1">Forms a cyclic heterotetrameric complex composed of two molecules of XerC and two molecules of XerD.</text>
</comment>
<comment type="subcellular location">
    <subcellularLocation>
        <location evidence="1">Cytoplasm</location>
    </subcellularLocation>
</comment>
<comment type="similarity">
    <text evidence="1">Belongs to the 'phage' integrase family. XerC subfamily.</text>
</comment>
<protein>
    <recommendedName>
        <fullName evidence="1">Tyrosine recombinase XerC</fullName>
    </recommendedName>
</protein>
<name>XERC_HAEI8</name>
<accession>Q4QMP0</accession>
<proteinExistence type="inferred from homology"/>
<keyword id="KW-0131">Cell cycle</keyword>
<keyword id="KW-0132">Cell division</keyword>
<keyword id="KW-0159">Chromosome partition</keyword>
<keyword id="KW-0963">Cytoplasm</keyword>
<keyword id="KW-0229">DNA integration</keyword>
<keyword id="KW-0233">DNA recombination</keyword>
<keyword id="KW-0238">DNA-binding</keyword>
<organism>
    <name type="scientific">Haemophilus influenzae (strain 86-028NP)</name>
    <dbReference type="NCBI Taxonomy" id="281310"/>
    <lineage>
        <taxon>Bacteria</taxon>
        <taxon>Pseudomonadati</taxon>
        <taxon>Pseudomonadota</taxon>
        <taxon>Gammaproteobacteria</taxon>
        <taxon>Pasteurellales</taxon>
        <taxon>Pasteurellaceae</taxon>
        <taxon>Haemophilus</taxon>
    </lineage>
</organism>
<dbReference type="EMBL" id="CP000057">
    <property type="protein sequence ID" value="AAX87707.1"/>
    <property type="molecule type" value="Genomic_DNA"/>
</dbReference>
<dbReference type="RefSeq" id="WP_011272163.1">
    <property type="nucleotide sequence ID" value="NC_007146.2"/>
</dbReference>
<dbReference type="SMR" id="Q4QMP0"/>
<dbReference type="GeneID" id="93219675"/>
<dbReference type="KEGG" id="hit:NTHI0798"/>
<dbReference type="HOGENOM" id="CLU_027562_9_0_6"/>
<dbReference type="Proteomes" id="UP000002525">
    <property type="component" value="Chromosome"/>
</dbReference>
<dbReference type="GO" id="GO:0005737">
    <property type="term" value="C:cytoplasm"/>
    <property type="evidence" value="ECO:0007669"/>
    <property type="project" value="UniProtKB-SubCell"/>
</dbReference>
<dbReference type="GO" id="GO:0003677">
    <property type="term" value="F:DNA binding"/>
    <property type="evidence" value="ECO:0007669"/>
    <property type="project" value="UniProtKB-KW"/>
</dbReference>
<dbReference type="GO" id="GO:0009037">
    <property type="term" value="F:tyrosine-based site-specific recombinase activity"/>
    <property type="evidence" value="ECO:0007669"/>
    <property type="project" value="UniProtKB-UniRule"/>
</dbReference>
<dbReference type="GO" id="GO:0051301">
    <property type="term" value="P:cell division"/>
    <property type="evidence" value="ECO:0007669"/>
    <property type="project" value="UniProtKB-KW"/>
</dbReference>
<dbReference type="GO" id="GO:0007059">
    <property type="term" value="P:chromosome segregation"/>
    <property type="evidence" value="ECO:0007669"/>
    <property type="project" value="UniProtKB-UniRule"/>
</dbReference>
<dbReference type="GO" id="GO:0006313">
    <property type="term" value="P:DNA transposition"/>
    <property type="evidence" value="ECO:0007669"/>
    <property type="project" value="UniProtKB-UniRule"/>
</dbReference>
<dbReference type="CDD" id="cd00798">
    <property type="entry name" value="INT_XerDC_C"/>
    <property type="match status" value="1"/>
</dbReference>
<dbReference type="Gene3D" id="1.10.150.130">
    <property type="match status" value="1"/>
</dbReference>
<dbReference type="Gene3D" id="1.10.443.10">
    <property type="entry name" value="Intergrase catalytic core"/>
    <property type="match status" value="1"/>
</dbReference>
<dbReference type="HAMAP" id="MF_01808">
    <property type="entry name" value="Recomb_XerC_XerD"/>
    <property type="match status" value="1"/>
</dbReference>
<dbReference type="InterPro" id="IPR044068">
    <property type="entry name" value="CB"/>
</dbReference>
<dbReference type="InterPro" id="IPR011010">
    <property type="entry name" value="DNA_brk_join_enz"/>
</dbReference>
<dbReference type="InterPro" id="IPR013762">
    <property type="entry name" value="Integrase-like_cat_sf"/>
</dbReference>
<dbReference type="InterPro" id="IPR002104">
    <property type="entry name" value="Integrase_catalytic"/>
</dbReference>
<dbReference type="InterPro" id="IPR010998">
    <property type="entry name" value="Integrase_recombinase_N"/>
</dbReference>
<dbReference type="InterPro" id="IPR004107">
    <property type="entry name" value="Integrase_SAM-like_N"/>
</dbReference>
<dbReference type="InterPro" id="IPR011931">
    <property type="entry name" value="Recomb_XerC"/>
</dbReference>
<dbReference type="InterPro" id="IPR023009">
    <property type="entry name" value="Tyrosine_recombinase_XerC/XerD"/>
</dbReference>
<dbReference type="InterPro" id="IPR050090">
    <property type="entry name" value="Tyrosine_recombinase_XerCD"/>
</dbReference>
<dbReference type="NCBIfam" id="NF001399">
    <property type="entry name" value="PRK00283.1"/>
    <property type="match status" value="1"/>
</dbReference>
<dbReference type="NCBIfam" id="TIGR02224">
    <property type="entry name" value="recomb_XerC"/>
    <property type="match status" value="1"/>
</dbReference>
<dbReference type="PANTHER" id="PTHR30349">
    <property type="entry name" value="PHAGE INTEGRASE-RELATED"/>
    <property type="match status" value="1"/>
</dbReference>
<dbReference type="PANTHER" id="PTHR30349:SF81">
    <property type="entry name" value="TYROSINE RECOMBINASE XERC"/>
    <property type="match status" value="1"/>
</dbReference>
<dbReference type="Pfam" id="PF02899">
    <property type="entry name" value="Phage_int_SAM_1"/>
    <property type="match status" value="1"/>
</dbReference>
<dbReference type="Pfam" id="PF00589">
    <property type="entry name" value="Phage_integrase"/>
    <property type="match status" value="1"/>
</dbReference>
<dbReference type="SUPFAM" id="SSF56349">
    <property type="entry name" value="DNA breaking-rejoining enzymes"/>
    <property type="match status" value="1"/>
</dbReference>
<dbReference type="SUPFAM" id="SSF47823">
    <property type="entry name" value="lambda integrase-like, N-terminal domain"/>
    <property type="match status" value="1"/>
</dbReference>
<dbReference type="PROSITE" id="PS51900">
    <property type="entry name" value="CB"/>
    <property type="match status" value="1"/>
</dbReference>
<dbReference type="PROSITE" id="PS51898">
    <property type="entry name" value="TYR_RECOMBINASE"/>
    <property type="match status" value="1"/>
</dbReference>
<gene>
    <name evidence="1" type="primary">xerC</name>
    <name type="ordered locus">NTHI0798</name>
</gene>
<reference key="1">
    <citation type="journal article" date="2005" name="J. Bacteriol.">
        <title>Genomic sequence of an otitis media isolate of nontypeable Haemophilus influenzae: comparative study with H. influenzae serotype d, strain KW20.</title>
        <authorList>
            <person name="Harrison A."/>
            <person name="Dyer D.W."/>
            <person name="Gillaspy A."/>
            <person name="Ray W.C."/>
            <person name="Mungur R."/>
            <person name="Carson M.B."/>
            <person name="Zhong H."/>
            <person name="Gipson J."/>
            <person name="Gipson M."/>
            <person name="Johnson L.S."/>
            <person name="Lewis L."/>
            <person name="Bakaletz L.O."/>
            <person name="Munson R.S. Jr."/>
        </authorList>
    </citation>
    <scope>NUCLEOTIDE SEQUENCE [LARGE SCALE GENOMIC DNA]</scope>
    <source>
        <strain>86-028NP</strain>
    </source>
</reference>